<proteinExistence type="inferred from homology"/>
<gene>
    <name evidence="1" type="primary">rpoA</name>
</gene>
<accession>Q01569</accession>
<feature type="chain" id="PRO_0000175490" description="DNA-directed RNA polymerase subunit alpha">
    <location>
        <begin position="1"/>
        <end position="314"/>
    </location>
</feature>
<feature type="region of interest" description="Alpha N-terminal domain (alpha-NTD)" evidence="1">
    <location>
        <begin position="1"/>
        <end position="227"/>
    </location>
</feature>
<feature type="region of interest" description="Alpha C-terminal domain (alpha-CTD)" evidence="1">
    <location>
        <begin position="237"/>
        <end position="314"/>
    </location>
</feature>
<reference key="1">
    <citation type="journal article" date="1992" name="Curr. Genet.">
        <title>Evolutionary analysis of the plastid-encoded gene for the alpha subunit of the DNA-dependent RNA polymerase of Pyrenomonas salina (Cryptophyceae).</title>
        <authorList>
            <person name="Maerz M."/>
            <person name="Rensing S.A."/>
            <person name="Igloi G.L."/>
            <person name="Maier U.-G."/>
        </authorList>
    </citation>
    <scope>NUCLEOTIDE SEQUENCE [GENOMIC DNA]</scope>
    <source>
        <strain>Ssp. Santore</strain>
    </source>
</reference>
<keyword id="KW-0150">Chloroplast</keyword>
<keyword id="KW-0240">DNA-directed RNA polymerase</keyword>
<keyword id="KW-0548">Nucleotidyltransferase</keyword>
<keyword id="KW-0934">Plastid</keyword>
<keyword id="KW-0804">Transcription</keyword>
<keyword id="KW-0808">Transferase</keyword>
<name>RPOA_PYRSA</name>
<comment type="function">
    <text evidence="1">DNA-dependent RNA polymerase catalyzes the transcription of DNA into RNA using the four ribonucleoside triphosphates as substrates.</text>
</comment>
<comment type="catalytic activity">
    <reaction evidence="1">
        <text>RNA(n) + a ribonucleoside 5'-triphosphate = RNA(n+1) + diphosphate</text>
        <dbReference type="Rhea" id="RHEA:21248"/>
        <dbReference type="Rhea" id="RHEA-COMP:14527"/>
        <dbReference type="Rhea" id="RHEA-COMP:17342"/>
        <dbReference type="ChEBI" id="CHEBI:33019"/>
        <dbReference type="ChEBI" id="CHEBI:61557"/>
        <dbReference type="ChEBI" id="CHEBI:140395"/>
        <dbReference type="EC" id="2.7.7.6"/>
    </reaction>
</comment>
<comment type="subunit">
    <text evidence="1">In plastids the minimal PEP RNA polymerase catalytic core is composed of four subunits: alpha, beta, beta', and beta''. When a (nuclear-encoded) sigma factor is associated with the core the holoenzyme is formed, which can initiate transcription.</text>
</comment>
<comment type="subcellular location">
    <subcellularLocation>
        <location>Plastid</location>
        <location>Chloroplast</location>
    </subcellularLocation>
</comment>
<comment type="domain">
    <text evidence="1">The N-terminal domain is essential for RNAP assembly and basal transcription, whereas the C-terminal domain is involved in interaction with transcriptional regulators and with upstream promoter elements.</text>
</comment>
<comment type="similarity">
    <text evidence="1">Belongs to the RNA polymerase alpha chain family.</text>
</comment>
<protein>
    <recommendedName>
        <fullName evidence="1">DNA-directed RNA polymerase subunit alpha</fullName>
        <shortName evidence="1">PEP</shortName>
        <ecNumber evidence="1">2.7.7.6</ecNumber>
    </recommendedName>
    <alternativeName>
        <fullName evidence="1">Plastid-encoded RNA polymerase subunit alpha</fullName>
        <shortName evidence="1">RNA polymerase subunit alpha</shortName>
    </alternativeName>
</protein>
<sequence>MTTFEIECIESTREGLRDHYSKFCLEPLNQGQGTTLGNALRRTLLADLEGTAIVAVRIAGVSHEFSTIPGIREDVLEILLNLKEVVLKSQIGTSGVGRLRVQGPAIVTTNHLELPSEIELIDPNQYIATICGNNILEMEFRIETGKGYNLVERDSDESSIDFLQVDAIFMPVKKVNYLSKDIRSENNLIQEQLTLEVWTNGSIDPQDAVSQAGKILTELLFPLKEINFKPDDSESIIEDSKINQILIEELQLSVRAYNCLKRAQIHSVADLLDYSQEDLIEIKNFGQKSAEEVIDALQKRLGINLPKEKTSKSN</sequence>
<dbReference type="EC" id="2.7.7.6" evidence="1"/>
<dbReference type="EMBL" id="X65872">
    <property type="protein sequence ID" value="CAA46702.1"/>
    <property type="molecule type" value="Genomic_DNA"/>
</dbReference>
<dbReference type="PIR" id="S26977">
    <property type="entry name" value="S26977"/>
</dbReference>
<dbReference type="SMR" id="Q01569"/>
<dbReference type="GO" id="GO:0009507">
    <property type="term" value="C:chloroplast"/>
    <property type="evidence" value="ECO:0007669"/>
    <property type="project" value="UniProtKB-SubCell"/>
</dbReference>
<dbReference type="GO" id="GO:0000428">
    <property type="term" value="C:DNA-directed RNA polymerase complex"/>
    <property type="evidence" value="ECO:0007669"/>
    <property type="project" value="UniProtKB-KW"/>
</dbReference>
<dbReference type="GO" id="GO:0005739">
    <property type="term" value="C:mitochondrion"/>
    <property type="evidence" value="ECO:0007669"/>
    <property type="project" value="GOC"/>
</dbReference>
<dbReference type="GO" id="GO:0003677">
    <property type="term" value="F:DNA binding"/>
    <property type="evidence" value="ECO:0007669"/>
    <property type="project" value="UniProtKB-UniRule"/>
</dbReference>
<dbReference type="GO" id="GO:0003899">
    <property type="term" value="F:DNA-directed RNA polymerase activity"/>
    <property type="evidence" value="ECO:0007669"/>
    <property type="project" value="UniProtKB-UniRule"/>
</dbReference>
<dbReference type="GO" id="GO:0046983">
    <property type="term" value="F:protein dimerization activity"/>
    <property type="evidence" value="ECO:0007669"/>
    <property type="project" value="InterPro"/>
</dbReference>
<dbReference type="GO" id="GO:0006351">
    <property type="term" value="P:DNA-templated transcription"/>
    <property type="evidence" value="ECO:0007669"/>
    <property type="project" value="UniProtKB-UniRule"/>
</dbReference>
<dbReference type="CDD" id="cd06928">
    <property type="entry name" value="RNAP_alpha_NTD"/>
    <property type="match status" value="1"/>
</dbReference>
<dbReference type="FunFam" id="2.170.120.12:FF:000001">
    <property type="entry name" value="DNA-directed RNA polymerase subunit alpha"/>
    <property type="match status" value="1"/>
</dbReference>
<dbReference type="Gene3D" id="1.10.150.20">
    <property type="entry name" value="5' to 3' exonuclease, C-terminal subdomain"/>
    <property type="match status" value="1"/>
</dbReference>
<dbReference type="Gene3D" id="2.170.120.12">
    <property type="entry name" value="DNA-directed RNA polymerase, insert domain"/>
    <property type="match status" value="1"/>
</dbReference>
<dbReference type="Gene3D" id="3.30.1360.10">
    <property type="entry name" value="RNA polymerase, RBP11-like subunit"/>
    <property type="match status" value="1"/>
</dbReference>
<dbReference type="HAMAP" id="MF_00059">
    <property type="entry name" value="RNApol_bact_RpoA"/>
    <property type="match status" value="1"/>
</dbReference>
<dbReference type="InterPro" id="IPR011262">
    <property type="entry name" value="DNA-dir_RNA_pol_insert"/>
</dbReference>
<dbReference type="InterPro" id="IPR011263">
    <property type="entry name" value="DNA-dir_RNA_pol_RpoA/D/Rpb3"/>
</dbReference>
<dbReference type="InterPro" id="IPR011773">
    <property type="entry name" value="DNA-dir_RpoA"/>
</dbReference>
<dbReference type="InterPro" id="IPR036603">
    <property type="entry name" value="RBP11-like"/>
</dbReference>
<dbReference type="InterPro" id="IPR011260">
    <property type="entry name" value="RNAP_asu_C"/>
</dbReference>
<dbReference type="InterPro" id="IPR036643">
    <property type="entry name" value="RNApol_insert_sf"/>
</dbReference>
<dbReference type="NCBIfam" id="NF003516">
    <property type="entry name" value="PRK05182.2-2"/>
    <property type="match status" value="1"/>
</dbReference>
<dbReference type="NCBIfam" id="NF003519">
    <property type="entry name" value="PRK05182.2-5"/>
    <property type="match status" value="1"/>
</dbReference>
<dbReference type="NCBIfam" id="TIGR02027">
    <property type="entry name" value="rpoA"/>
    <property type="match status" value="1"/>
</dbReference>
<dbReference type="Pfam" id="PF01000">
    <property type="entry name" value="RNA_pol_A_bac"/>
    <property type="match status" value="1"/>
</dbReference>
<dbReference type="Pfam" id="PF03118">
    <property type="entry name" value="RNA_pol_A_CTD"/>
    <property type="match status" value="1"/>
</dbReference>
<dbReference type="Pfam" id="PF01193">
    <property type="entry name" value="RNA_pol_L"/>
    <property type="match status" value="1"/>
</dbReference>
<dbReference type="SMART" id="SM00662">
    <property type="entry name" value="RPOLD"/>
    <property type="match status" value="1"/>
</dbReference>
<dbReference type="SUPFAM" id="SSF47789">
    <property type="entry name" value="C-terminal domain of RNA polymerase alpha subunit"/>
    <property type="match status" value="1"/>
</dbReference>
<dbReference type="SUPFAM" id="SSF56553">
    <property type="entry name" value="Insert subdomain of RNA polymerase alpha subunit"/>
    <property type="match status" value="1"/>
</dbReference>
<dbReference type="SUPFAM" id="SSF55257">
    <property type="entry name" value="RBP11-like subunits of RNA polymerase"/>
    <property type="match status" value="1"/>
</dbReference>
<organism>
    <name type="scientific">Pyrenomonas salina</name>
    <dbReference type="NCBI Taxonomy" id="3034"/>
    <lineage>
        <taxon>Eukaryota</taxon>
        <taxon>Cryptophyceae</taxon>
        <taxon>Pyrenomonadales</taxon>
        <taxon>Pyrenomonadaceae</taxon>
        <taxon>Pyrenomonas</taxon>
    </lineage>
</organism>
<geneLocation type="chloroplast"/>
<evidence type="ECO:0000255" key="1">
    <source>
        <dbReference type="HAMAP-Rule" id="MF_00059"/>
    </source>
</evidence>